<evidence type="ECO:0000255" key="1">
    <source>
        <dbReference type="HAMAP-Rule" id="MF_01369"/>
    </source>
</evidence>
<evidence type="ECO:0000305" key="2"/>
<accession>A9B414</accession>
<gene>
    <name evidence="1" type="primary">rplW</name>
    <name type="ordered locus">Haur_4917</name>
</gene>
<comment type="function">
    <text evidence="1">One of the early assembly proteins it binds 23S rRNA. One of the proteins that surrounds the polypeptide exit tunnel on the outside of the ribosome. Forms the main docking site for trigger factor binding to the ribosome.</text>
</comment>
<comment type="subunit">
    <text evidence="1">Part of the 50S ribosomal subunit. Contacts protein L29, and trigger factor when it is bound to the ribosome.</text>
</comment>
<comment type="similarity">
    <text evidence="1">Belongs to the universal ribosomal protein uL23 family.</text>
</comment>
<feature type="chain" id="PRO_1000144576" description="Large ribosomal subunit protein uL23">
    <location>
        <begin position="1"/>
        <end position="98"/>
    </location>
</feature>
<protein>
    <recommendedName>
        <fullName evidence="1">Large ribosomal subunit protein uL23</fullName>
    </recommendedName>
    <alternativeName>
        <fullName evidence="2">50S ribosomal protein L23</fullName>
    </alternativeName>
</protein>
<proteinExistence type="inferred from homology"/>
<keyword id="KW-0687">Ribonucleoprotein</keyword>
<keyword id="KW-0689">Ribosomal protein</keyword>
<keyword id="KW-0694">RNA-binding</keyword>
<keyword id="KW-0699">rRNA-binding</keyword>
<dbReference type="EMBL" id="CP000875">
    <property type="protein sequence ID" value="ABX07547.1"/>
    <property type="molecule type" value="Genomic_DNA"/>
</dbReference>
<dbReference type="SMR" id="A9B414"/>
<dbReference type="FunCoup" id="A9B414">
    <property type="interactions" value="368"/>
</dbReference>
<dbReference type="STRING" id="316274.Haur_4917"/>
<dbReference type="KEGG" id="hau:Haur_4917"/>
<dbReference type="eggNOG" id="COG0089">
    <property type="taxonomic scope" value="Bacteria"/>
</dbReference>
<dbReference type="HOGENOM" id="CLU_037562_3_2_0"/>
<dbReference type="InParanoid" id="A9B414"/>
<dbReference type="Proteomes" id="UP000000787">
    <property type="component" value="Chromosome"/>
</dbReference>
<dbReference type="GO" id="GO:1990904">
    <property type="term" value="C:ribonucleoprotein complex"/>
    <property type="evidence" value="ECO:0007669"/>
    <property type="project" value="UniProtKB-KW"/>
</dbReference>
<dbReference type="GO" id="GO:0005840">
    <property type="term" value="C:ribosome"/>
    <property type="evidence" value="ECO:0007669"/>
    <property type="project" value="UniProtKB-KW"/>
</dbReference>
<dbReference type="GO" id="GO:0019843">
    <property type="term" value="F:rRNA binding"/>
    <property type="evidence" value="ECO:0007669"/>
    <property type="project" value="UniProtKB-UniRule"/>
</dbReference>
<dbReference type="GO" id="GO:0003735">
    <property type="term" value="F:structural constituent of ribosome"/>
    <property type="evidence" value="ECO:0007669"/>
    <property type="project" value="InterPro"/>
</dbReference>
<dbReference type="GO" id="GO:0006412">
    <property type="term" value="P:translation"/>
    <property type="evidence" value="ECO:0007669"/>
    <property type="project" value="UniProtKB-UniRule"/>
</dbReference>
<dbReference type="FunFam" id="3.30.70.330:FF:000001">
    <property type="entry name" value="50S ribosomal protein L23"/>
    <property type="match status" value="1"/>
</dbReference>
<dbReference type="Gene3D" id="3.30.70.330">
    <property type="match status" value="1"/>
</dbReference>
<dbReference type="HAMAP" id="MF_01369_B">
    <property type="entry name" value="Ribosomal_uL23_B"/>
    <property type="match status" value="1"/>
</dbReference>
<dbReference type="InterPro" id="IPR012677">
    <property type="entry name" value="Nucleotide-bd_a/b_plait_sf"/>
</dbReference>
<dbReference type="InterPro" id="IPR013025">
    <property type="entry name" value="Ribosomal_uL23-like"/>
</dbReference>
<dbReference type="InterPro" id="IPR012678">
    <property type="entry name" value="Ribosomal_uL23/eL15/eS24_sf"/>
</dbReference>
<dbReference type="InterPro" id="IPR001014">
    <property type="entry name" value="Ribosomal_uL23_CS"/>
</dbReference>
<dbReference type="NCBIfam" id="NF004363">
    <property type="entry name" value="PRK05738.2-4"/>
    <property type="match status" value="1"/>
</dbReference>
<dbReference type="NCBIfam" id="NF004366">
    <property type="entry name" value="PRK05738.3-2"/>
    <property type="match status" value="1"/>
</dbReference>
<dbReference type="PANTHER" id="PTHR11620">
    <property type="entry name" value="60S RIBOSOMAL PROTEIN L23A"/>
    <property type="match status" value="1"/>
</dbReference>
<dbReference type="Pfam" id="PF00276">
    <property type="entry name" value="Ribosomal_L23"/>
    <property type="match status" value="1"/>
</dbReference>
<dbReference type="SUPFAM" id="SSF54189">
    <property type="entry name" value="Ribosomal proteins S24e, L23 and L15e"/>
    <property type="match status" value="1"/>
</dbReference>
<dbReference type="PROSITE" id="PS00050">
    <property type="entry name" value="RIBOSOMAL_L23"/>
    <property type="match status" value="1"/>
</dbReference>
<sequence length="98" mass="11117">MNAHDIIIRPVITEKNTALMEEGKYTFEVAQEANKPMIKAAVQQIFNVNVKAVNTMNVKGKLKVRRTRNGQQSGYSRSWKKAIVTLAPGERIEIFEDL</sequence>
<name>RL23_HERA2</name>
<reference key="1">
    <citation type="journal article" date="2011" name="Stand. Genomic Sci.">
        <title>Complete genome sequence of the filamentous gliding predatory bacterium Herpetosiphon aurantiacus type strain (114-95(T)).</title>
        <authorList>
            <person name="Kiss H."/>
            <person name="Nett M."/>
            <person name="Domin N."/>
            <person name="Martin K."/>
            <person name="Maresca J.A."/>
            <person name="Copeland A."/>
            <person name="Lapidus A."/>
            <person name="Lucas S."/>
            <person name="Berry K.W."/>
            <person name="Glavina Del Rio T."/>
            <person name="Dalin E."/>
            <person name="Tice H."/>
            <person name="Pitluck S."/>
            <person name="Richardson P."/>
            <person name="Bruce D."/>
            <person name="Goodwin L."/>
            <person name="Han C."/>
            <person name="Detter J.C."/>
            <person name="Schmutz J."/>
            <person name="Brettin T."/>
            <person name="Land M."/>
            <person name="Hauser L."/>
            <person name="Kyrpides N.C."/>
            <person name="Ivanova N."/>
            <person name="Goeker M."/>
            <person name="Woyke T."/>
            <person name="Klenk H.P."/>
            <person name="Bryant D.A."/>
        </authorList>
    </citation>
    <scope>NUCLEOTIDE SEQUENCE [LARGE SCALE GENOMIC DNA]</scope>
    <source>
        <strain>ATCC 23779 / DSM 785 / 114-95</strain>
    </source>
</reference>
<organism>
    <name type="scientific">Herpetosiphon aurantiacus (strain ATCC 23779 / DSM 785 / 114-95)</name>
    <dbReference type="NCBI Taxonomy" id="316274"/>
    <lineage>
        <taxon>Bacteria</taxon>
        <taxon>Bacillati</taxon>
        <taxon>Chloroflexota</taxon>
        <taxon>Chloroflexia</taxon>
        <taxon>Herpetosiphonales</taxon>
        <taxon>Herpetosiphonaceae</taxon>
        <taxon>Herpetosiphon</taxon>
    </lineage>
</organism>